<keyword id="KW-0963">Cytoplasm</keyword>
<keyword id="KW-0489">Methyltransferase</keyword>
<keyword id="KW-0949">S-adenosyl-L-methionine</keyword>
<keyword id="KW-0808">Transferase</keyword>
<keyword id="KW-0819">tRNA processing</keyword>
<organism>
    <name type="scientific">Xanthomonas oryzae pv. oryzae (strain PXO99A)</name>
    <dbReference type="NCBI Taxonomy" id="360094"/>
    <lineage>
        <taxon>Bacteria</taxon>
        <taxon>Pseudomonadati</taxon>
        <taxon>Pseudomonadota</taxon>
        <taxon>Gammaproteobacteria</taxon>
        <taxon>Lysobacterales</taxon>
        <taxon>Lysobacteraceae</taxon>
        <taxon>Xanthomonas</taxon>
    </lineage>
</organism>
<accession>B2SJV1</accession>
<reference key="1">
    <citation type="journal article" date="2008" name="BMC Genomics">
        <title>Genome sequence and rapid evolution of the rice pathogen Xanthomonas oryzae pv. oryzae PXO99A.</title>
        <authorList>
            <person name="Salzberg S.L."/>
            <person name="Sommer D.D."/>
            <person name="Schatz M.C."/>
            <person name="Phillippy A.M."/>
            <person name="Rabinowicz P.D."/>
            <person name="Tsuge S."/>
            <person name="Furutani A."/>
            <person name="Ochiai H."/>
            <person name="Delcher A.L."/>
            <person name="Kelley D."/>
            <person name="Madupu R."/>
            <person name="Puiu D."/>
            <person name="Radune D."/>
            <person name="Shumway M."/>
            <person name="Trapnell C."/>
            <person name="Aparna G."/>
            <person name="Jha G."/>
            <person name="Pandey A."/>
            <person name="Patil P.B."/>
            <person name="Ishihara H."/>
            <person name="Meyer D.F."/>
            <person name="Szurek B."/>
            <person name="Verdier V."/>
            <person name="Koebnik R."/>
            <person name="Dow J.M."/>
            <person name="Ryan R.P."/>
            <person name="Hirata H."/>
            <person name="Tsuyumu S."/>
            <person name="Won Lee S."/>
            <person name="Seo Y.-S."/>
            <person name="Sriariyanum M."/>
            <person name="Ronald P.C."/>
            <person name="Sonti R.V."/>
            <person name="Van Sluys M.-A."/>
            <person name="Leach J.E."/>
            <person name="White F.F."/>
            <person name="Bogdanove A.J."/>
        </authorList>
    </citation>
    <scope>NUCLEOTIDE SEQUENCE [LARGE SCALE GENOMIC DNA]</scope>
    <source>
        <strain>PXO99A</strain>
    </source>
</reference>
<comment type="function">
    <text evidence="1">Specifically methylates guanosine-37 in various tRNAs.</text>
</comment>
<comment type="catalytic activity">
    <reaction evidence="1">
        <text>guanosine(37) in tRNA + S-adenosyl-L-methionine = N(1)-methylguanosine(37) in tRNA + S-adenosyl-L-homocysteine + H(+)</text>
        <dbReference type="Rhea" id="RHEA:36899"/>
        <dbReference type="Rhea" id="RHEA-COMP:10145"/>
        <dbReference type="Rhea" id="RHEA-COMP:10147"/>
        <dbReference type="ChEBI" id="CHEBI:15378"/>
        <dbReference type="ChEBI" id="CHEBI:57856"/>
        <dbReference type="ChEBI" id="CHEBI:59789"/>
        <dbReference type="ChEBI" id="CHEBI:73542"/>
        <dbReference type="ChEBI" id="CHEBI:74269"/>
        <dbReference type="EC" id="2.1.1.228"/>
    </reaction>
</comment>
<comment type="subunit">
    <text evidence="1">Homodimer.</text>
</comment>
<comment type="subcellular location">
    <subcellularLocation>
        <location evidence="1">Cytoplasm</location>
    </subcellularLocation>
</comment>
<comment type="similarity">
    <text evidence="1">Belongs to the RNA methyltransferase TrmD family.</text>
</comment>
<sequence length="259" mass="28694">MRIDVISLFPEFIAQCAAFGVVGRAQERGLLELQGWNPREHAQGNYRRVDDRPFGGGPGMVMLIEPLRACLDAVQAADARPAPVIYFSPQGRRLTQMLARELAQLPRMVLLCGRYEGVDERFLAQAVDMEISIGDYVLSGGELGAAVVVDVVTRLQEGVLNDAESAAQDSFEGPQGLLDCPHYSHPSSHAWGDVPEVLRSGNHAAIARWRRQQSLGRTWLRRPDLLDEAGLDKHDRRLLEEFRRELAKGDEESGCTPSP</sequence>
<protein>
    <recommendedName>
        <fullName evidence="1">tRNA (guanine-N(1)-)-methyltransferase</fullName>
        <ecNumber evidence="1">2.1.1.228</ecNumber>
    </recommendedName>
    <alternativeName>
        <fullName evidence="1">M1G-methyltransferase</fullName>
    </alternativeName>
    <alternativeName>
        <fullName evidence="1">tRNA [GM37] methyltransferase</fullName>
    </alternativeName>
</protein>
<proteinExistence type="inferred from homology"/>
<feature type="chain" id="PRO_1000130225" description="tRNA (guanine-N(1)-)-methyltransferase">
    <location>
        <begin position="1"/>
        <end position="259"/>
    </location>
</feature>
<feature type="binding site" evidence="1">
    <location>
        <position position="113"/>
    </location>
    <ligand>
        <name>S-adenosyl-L-methionine</name>
        <dbReference type="ChEBI" id="CHEBI:59789"/>
    </ligand>
</feature>
<feature type="binding site" evidence="1">
    <location>
        <begin position="133"/>
        <end position="138"/>
    </location>
    <ligand>
        <name>S-adenosyl-L-methionine</name>
        <dbReference type="ChEBI" id="CHEBI:59789"/>
    </ligand>
</feature>
<evidence type="ECO:0000255" key="1">
    <source>
        <dbReference type="HAMAP-Rule" id="MF_00605"/>
    </source>
</evidence>
<dbReference type="EC" id="2.1.1.228" evidence="1"/>
<dbReference type="EMBL" id="CP000967">
    <property type="protein sequence ID" value="ACD60468.1"/>
    <property type="molecule type" value="Genomic_DNA"/>
</dbReference>
<dbReference type="RefSeq" id="WP_011407910.1">
    <property type="nucleotide sequence ID" value="NC_010717.2"/>
</dbReference>
<dbReference type="SMR" id="B2SJV1"/>
<dbReference type="KEGG" id="xop:PXO_02149"/>
<dbReference type="eggNOG" id="COG0336">
    <property type="taxonomic scope" value="Bacteria"/>
</dbReference>
<dbReference type="HOGENOM" id="CLU_047363_0_1_6"/>
<dbReference type="Proteomes" id="UP000001740">
    <property type="component" value="Chromosome"/>
</dbReference>
<dbReference type="GO" id="GO:0005829">
    <property type="term" value="C:cytosol"/>
    <property type="evidence" value="ECO:0007669"/>
    <property type="project" value="TreeGrafter"/>
</dbReference>
<dbReference type="GO" id="GO:0052906">
    <property type="term" value="F:tRNA (guanine(37)-N1)-methyltransferase activity"/>
    <property type="evidence" value="ECO:0007669"/>
    <property type="project" value="UniProtKB-UniRule"/>
</dbReference>
<dbReference type="GO" id="GO:0002939">
    <property type="term" value="P:tRNA N1-guanine methylation"/>
    <property type="evidence" value="ECO:0007669"/>
    <property type="project" value="TreeGrafter"/>
</dbReference>
<dbReference type="CDD" id="cd18080">
    <property type="entry name" value="TrmD-like"/>
    <property type="match status" value="1"/>
</dbReference>
<dbReference type="FunFam" id="1.10.1270.20:FF:000001">
    <property type="entry name" value="tRNA (guanine-N(1)-)-methyltransferase"/>
    <property type="match status" value="1"/>
</dbReference>
<dbReference type="FunFam" id="3.40.1280.10:FF:000001">
    <property type="entry name" value="tRNA (guanine-N(1)-)-methyltransferase"/>
    <property type="match status" value="1"/>
</dbReference>
<dbReference type="Gene3D" id="3.40.1280.10">
    <property type="match status" value="1"/>
</dbReference>
<dbReference type="Gene3D" id="1.10.1270.20">
    <property type="entry name" value="tRNA(m1g37)methyltransferase, domain 2"/>
    <property type="match status" value="1"/>
</dbReference>
<dbReference type="HAMAP" id="MF_00605">
    <property type="entry name" value="TrmD"/>
    <property type="match status" value="1"/>
</dbReference>
<dbReference type="InterPro" id="IPR029028">
    <property type="entry name" value="Alpha/beta_knot_MTases"/>
</dbReference>
<dbReference type="InterPro" id="IPR023148">
    <property type="entry name" value="tRNA_m1G_MeTrfase_C_sf"/>
</dbReference>
<dbReference type="InterPro" id="IPR002649">
    <property type="entry name" value="tRNA_m1G_MeTrfase_TrmD"/>
</dbReference>
<dbReference type="InterPro" id="IPR029026">
    <property type="entry name" value="tRNA_m1G_MTases_N"/>
</dbReference>
<dbReference type="InterPro" id="IPR016009">
    <property type="entry name" value="tRNA_MeTrfase_TRMD/TRM10"/>
</dbReference>
<dbReference type="NCBIfam" id="NF000648">
    <property type="entry name" value="PRK00026.1"/>
    <property type="match status" value="1"/>
</dbReference>
<dbReference type="NCBIfam" id="TIGR00088">
    <property type="entry name" value="trmD"/>
    <property type="match status" value="1"/>
</dbReference>
<dbReference type="PANTHER" id="PTHR46417">
    <property type="entry name" value="TRNA (GUANINE-N(1)-)-METHYLTRANSFERASE"/>
    <property type="match status" value="1"/>
</dbReference>
<dbReference type="PANTHER" id="PTHR46417:SF1">
    <property type="entry name" value="TRNA (GUANINE-N(1)-)-METHYLTRANSFERASE"/>
    <property type="match status" value="1"/>
</dbReference>
<dbReference type="Pfam" id="PF01746">
    <property type="entry name" value="tRNA_m1G_MT"/>
    <property type="match status" value="1"/>
</dbReference>
<dbReference type="PIRSF" id="PIRSF000386">
    <property type="entry name" value="tRNA_mtase"/>
    <property type="match status" value="1"/>
</dbReference>
<dbReference type="SUPFAM" id="SSF75217">
    <property type="entry name" value="alpha/beta knot"/>
    <property type="match status" value="1"/>
</dbReference>
<gene>
    <name evidence="1" type="primary">trmD</name>
    <name type="ordered locus">PXO_02149</name>
</gene>
<name>TRMD_XANOP</name>